<sequence length="1436" mass="162460">MTEQQKFKVLADQIKISNQLDAEILNSGELTRIDVSNKNRTWEFHITLPQFLAHEDYLLFINAIEQEFKDIANVTCRFTVTNGTNQDEHAIKYFGHCIDQTALSPKVKGQLKQKKLIMSGKVLKVMVSNDIERNHFDKACNGSLIKAFRNCGFDIDKIIFETNDNDQEQNLASLEAHIQEEDEQSARLATEKLEKMKAEKAKQQDNNESAVDKCQIGKPIQIENIKPIESIIEEEFKVAIEGVIFDINLKELKSGRHIVEIKVTDYTDSLVLKMFTRKNKDDLEHFKALSVGKWVRAQGRIEEDTFIRDLVMMMSDIEEIKKATKKDKAEEKRVEFHLHTAMSQMDGIPNIGAYVKQAADWGHPAIAVTDHNVVQAFPDAHAAAEKHGIKMIYGMEGMLVDDGVPIAYKPQDVVLKDATYVVFDVETTGLSNQYDKIIELAAVKVHNGEIIDKFERFSNPHERLSETIINLTHITDDMLVDAPEIEEVLTEFKEWVGDAIFVAHNASFDMGFIDTGYERLGFGPSTNGVIDTLELSRTINTEYGKHGLNFLAKKYGVELTQHHRAIYDTEATAYIFIKMVQQMKELGVLNHNEINKKLSNEDAYKRARPSHVTLIVQNQQGLKNLFKIVSASLVKYFYRTPRIPRSLLDEYREGLLVGTACDEGELFTAVMQKDQSQVEKIAKYYDFIEIQPPALYQDLIDRELIRDTETLHEIYQRLIHAGDTAGIPVIATGNAHYLFEHDGIARKILIASQPGNPLNRSTLPEAHFRTTDEMLNEFHFLGEEKAHEIVVKNTNELADRIERVVPIKDELYTPRMEGANEEIRELSYANARKLYGEDLPQIVIDRLEKELKSIIGNGFAVIYLISQRLVKKSLDDGYLVGSRGSVGSSFVATMTEITEVNPLPPHYICPNCKTSEFFNDGSVGSGFDLPDKTCETCGAPLIKEGQDIPFETFLGFKGDKVPDIDLNFSGEYQPNAHNYTKVLFGEDKVFRAGTIGTVAEKTAFGYVKGYLNDQGIHKRGAEIDRLVKGCTGVKRTTGQHPGGIIVVPDYMDIYDFTPIQYPADDQNSAWMTTHFDFHSIHDNVLKLDILGHDDPTMIRMLQDLSGIDPKTIPVDDKEVMQIFSTPESLGVTEDEILCKTGTFGVPEFGTGFVRQMLEDTKPTTFSELVQISGLSHGTDVWLGNAQELIKTGICDLSSVIGCRDDIMVYLMYAGLEPSMAFKIMESVRKGKGLTEEMIETMKENEVPDWYLDSCLKIKYMFPKAHAAAYVLMAVRIAYFKVHHPLYYYASYFTIRASDFDLITMIKDKTSIRNTVKDMYSRYMDLGKKEKDVLTVLEIMNEMAHRGYRMQPISLEKSQAFEFIIEGDTLIPPFISVPGLGENVAKRIVEARDDGPFLSKEDLNKKAGLSQKIIEYLDELGSLPNLPDKAQLSIFDM</sequence>
<organism>
    <name type="scientific">Staphylococcus aureus (strain USA300)</name>
    <dbReference type="NCBI Taxonomy" id="367830"/>
    <lineage>
        <taxon>Bacteria</taxon>
        <taxon>Bacillati</taxon>
        <taxon>Bacillota</taxon>
        <taxon>Bacilli</taxon>
        <taxon>Bacillales</taxon>
        <taxon>Staphylococcaceae</taxon>
        <taxon>Staphylococcus</taxon>
    </lineage>
</organism>
<evidence type="ECO:0000255" key="1">
    <source>
        <dbReference type="HAMAP-Rule" id="MF_00356"/>
    </source>
</evidence>
<dbReference type="EC" id="2.7.7.7" evidence="1"/>
<dbReference type="EMBL" id="CP000255">
    <property type="protein sequence ID" value="ABD22133.1"/>
    <property type="molecule type" value="Genomic_DNA"/>
</dbReference>
<dbReference type="RefSeq" id="WP_001820550.1">
    <property type="nucleotide sequence ID" value="NZ_CP027476.1"/>
</dbReference>
<dbReference type="SMR" id="Q2FHH4"/>
<dbReference type="KEGG" id="saa:SAUSA300_1157"/>
<dbReference type="HOGENOM" id="CLU_003297_2_0_9"/>
<dbReference type="OMA" id="QGCTGVK"/>
<dbReference type="Proteomes" id="UP000001939">
    <property type="component" value="Chromosome"/>
</dbReference>
<dbReference type="GO" id="GO:0005737">
    <property type="term" value="C:cytoplasm"/>
    <property type="evidence" value="ECO:0007669"/>
    <property type="project" value="UniProtKB-SubCell"/>
</dbReference>
<dbReference type="GO" id="GO:0008408">
    <property type="term" value="F:3'-5' exonuclease activity"/>
    <property type="evidence" value="ECO:0007669"/>
    <property type="project" value="UniProtKB-UniRule"/>
</dbReference>
<dbReference type="GO" id="GO:0003677">
    <property type="term" value="F:DNA binding"/>
    <property type="evidence" value="ECO:0007669"/>
    <property type="project" value="UniProtKB-UniRule"/>
</dbReference>
<dbReference type="GO" id="GO:0003887">
    <property type="term" value="F:DNA-directed DNA polymerase activity"/>
    <property type="evidence" value="ECO:0007669"/>
    <property type="project" value="UniProtKB-UniRule"/>
</dbReference>
<dbReference type="GO" id="GO:0006261">
    <property type="term" value="P:DNA-templated DNA replication"/>
    <property type="evidence" value="ECO:0007669"/>
    <property type="project" value="UniProtKB-UniRule"/>
</dbReference>
<dbReference type="CDD" id="cd06127">
    <property type="entry name" value="DEDDh"/>
    <property type="match status" value="1"/>
</dbReference>
<dbReference type="CDD" id="cd07435">
    <property type="entry name" value="PHP_PolIIIA_POLC"/>
    <property type="match status" value="1"/>
</dbReference>
<dbReference type="CDD" id="cd04484">
    <property type="entry name" value="polC_OBF"/>
    <property type="match status" value="1"/>
</dbReference>
<dbReference type="FunFam" id="3.30.420.10:FF:000045">
    <property type="entry name" value="3'-5' exonuclease DinG"/>
    <property type="match status" value="1"/>
</dbReference>
<dbReference type="Gene3D" id="1.10.150.870">
    <property type="match status" value="1"/>
</dbReference>
<dbReference type="Gene3D" id="3.30.1900.20">
    <property type="match status" value="2"/>
</dbReference>
<dbReference type="Gene3D" id="6.10.140.1510">
    <property type="match status" value="1"/>
</dbReference>
<dbReference type="Gene3D" id="3.20.20.140">
    <property type="entry name" value="Metal-dependent hydrolases"/>
    <property type="match status" value="1"/>
</dbReference>
<dbReference type="Gene3D" id="2.40.50.140">
    <property type="entry name" value="Nucleic acid-binding proteins"/>
    <property type="match status" value="1"/>
</dbReference>
<dbReference type="Gene3D" id="1.10.150.700">
    <property type="entry name" value="PolC, middle finger domain"/>
    <property type="match status" value="1"/>
</dbReference>
<dbReference type="Gene3D" id="3.30.420.10">
    <property type="entry name" value="Ribonuclease H-like superfamily/Ribonuclease H"/>
    <property type="match status" value="1"/>
</dbReference>
<dbReference type="HAMAP" id="MF_00356">
    <property type="entry name" value="DNApol_PolC"/>
    <property type="match status" value="1"/>
</dbReference>
<dbReference type="InterPro" id="IPR011708">
    <property type="entry name" value="DNA_pol3_alpha_NTPase_dom"/>
</dbReference>
<dbReference type="InterPro" id="IPR040982">
    <property type="entry name" value="DNA_pol3_finger"/>
</dbReference>
<dbReference type="InterPro" id="IPR024754">
    <property type="entry name" value="DNA_PolC-like_N_II"/>
</dbReference>
<dbReference type="InterPro" id="IPR028112">
    <property type="entry name" value="DNA_PolC-type_N_I"/>
</dbReference>
<dbReference type="InterPro" id="IPR004805">
    <property type="entry name" value="DnaE2/DnaE/PolC"/>
</dbReference>
<dbReference type="InterPro" id="IPR029460">
    <property type="entry name" value="DNAPol_HHH"/>
</dbReference>
<dbReference type="InterPro" id="IPR006054">
    <property type="entry name" value="DnaQ"/>
</dbReference>
<dbReference type="InterPro" id="IPR013520">
    <property type="entry name" value="Exonuclease_RNaseT/DNA_pol3"/>
</dbReference>
<dbReference type="InterPro" id="IPR012340">
    <property type="entry name" value="NA-bd_OB-fold"/>
</dbReference>
<dbReference type="InterPro" id="IPR004013">
    <property type="entry name" value="PHP_dom"/>
</dbReference>
<dbReference type="InterPro" id="IPR003141">
    <property type="entry name" value="Pol/His_phosphatase_N"/>
</dbReference>
<dbReference type="InterPro" id="IPR006308">
    <property type="entry name" value="Pol_III_a_PolC-type_gram_pos"/>
</dbReference>
<dbReference type="InterPro" id="IPR044923">
    <property type="entry name" value="PolC_middle_finger_sf"/>
</dbReference>
<dbReference type="InterPro" id="IPR012337">
    <property type="entry name" value="RNaseH-like_sf"/>
</dbReference>
<dbReference type="InterPro" id="IPR036397">
    <property type="entry name" value="RNaseH_sf"/>
</dbReference>
<dbReference type="NCBIfam" id="TIGR00573">
    <property type="entry name" value="dnaq"/>
    <property type="match status" value="1"/>
</dbReference>
<dbReference type="NCBIfam" id="TIGR01405">
    <property type="entry name" value="polC_Gram_pos"/>
    <property type="match status" value="1"/>
</dbReference>
<dbReference type="NCBIfam" id="NF001688">
    <property type="entry name" value="PRK00448.1"/>
    <property type="match status" value="1"/>
</dbReference>
<dbReference type="PANTHER" id="PTHR32294:SF5">
    <property type="entry name" value="DNA POLYMERASE III POLC-TYPE"/>
    <property type="match status" value="1"/>
</dbReference>
<dbReference type="PANTHER" id="PTHR32294">
    <property type="entry name" value="DNA POLYMERASE III SUBUNIT ALPHA"/>
    <property type="match status" value="1"/>
</dbReference>
<dbReference type="Pfam" id="PF14480">
    <property type="entry name" value="DNA_pol3_a_NI"/>
    <property type="match status" value="1"/>
</dbReference>
<dbReference type="Pfam" id="PF11490">
    <property type="entry name" value="DNA_pol3_a_NII"/>
    <property type="match status" value="1"/>
</dbReference>
<dbReference type="Pfam" id="PF07733">
    <property type="entry name" value="DNA_pol3_alpha"/>
    <property type="match status" value="2"/>
</dbReference>
<dbReference type="Pfam" id="PF17657">
    <property type="entry name" value="DNA_pol3_finger"/>
    <property type="match status" value="1"/>
</dbReference>
<dbReference type="Pfam" id="PF14579">
    <property type="entry name" value="HHH_6"/>
    <property type="match status" value="1"/>
</dbReference>
<dbReference type="Pfam" id="PF02811">
    <property type="entry name" value="PHP"/>
    <property type="match status" value="2"/>
</dbReference>
<dbReference type="Pfam" id="PF00929">
    <property type="entry name" value="RNase_T"/>
    <property type="match status" value="1"/>
</dbReference>
<dbReference type="SMART" id="SM00479">
    <property type="entry name" value="EXOIII"/>
    <property type="match status" value="1"/>
</dbReference>
<dbReference type="SMART" id="SM00481">
    <property type="entry name" value="POLIIIAc"/>
    <property type="match status" value="1"/>
</dbReference>
<dbReference type="SUPFAM" id="SSF81585">
    <property type="entry name" value="PsbU/PolX domain-like"/>
    <property type="match status" value="1"/>
</dbReference>
<dbReference type="SUPFAM" id="SSF53098">
    <property type="entry name" value="Ribonuclease H-like"/>
    <property type="match status" value="1"/>
</dbReference>
<proteinExistence type="inferred from homology"/>
<name>DPO3_STAA3</name>
<feature type="chain" id="PRO_1000048479" description="DNA polymerase III PolC-type">
    <location>
        <begin position="1"/>
        <end position="1436"/>
    </location>
</feature>
<feature type="domain" description="Exonuclease">
    <location>
        <begin position="420"/>
        <end position="576"/>
    </location>
</feature>
<protein>
    <recommendedName>
        <fullName evidence="1">DNA polymerase III PolC-type</fullName>
        <shortName evidence="1">PolIII</shortName>
        <ecNumber evidence="1">2.7.7.7</ecNumber>
    </recommendedName>
</protein>
<gene>
    <name evidence="1" type="primary">polC</name>
    <name type="ordered locus">SAUSA300_1157</name>
</gene>
<accession>Q2FHH4</accession>
<keyword id="KW-0963">Cytoplasm</keyword>
<keyword id="KW-0235">DNA replication</keyword>
<keyword id="KW-0239">DNA-directed DNA polymerase</keyword>
<keyword id="KW-0269">Exonuclease</keyword>
<keyword id="KW-0378">Hydrolase</keyword>
<keyword id="KW-0540">Nuclease</keyword>
<keyword id="KW-0548">Nucleotidyltransferase</keyword>
<keyword id="KW-0808">Transferase</keyword>
<reference key="1">
    <citation type="journal article" date="2006" name="Lancet">
        <title>Complete genome sequence of USA300, an epidemic clone of community-acquired meticillin-resistant Staphylococcus aureus.</title>
        <authorList>
            <person name="Diep B.A."/>
            <person name="Gill S.R."/>
            <person name="Chang R.F."/>
            <person name="Phan T.H."/>
            <person name="Chen J.H."/>
            <person name="Davidson M.G."/>
            <person name="Lin F."/>
            <person name="Lin J."/>
            <person name="Carleton H.A."/>
            <person name="Mongodin E.F."/>
            <person name="Sensabaugh G.F."/>
            <person name="Perdreau-Remington F."/>
        </authorList>
    </citation>
    <scope>NUCLEOTIDE SEQUENCE [LARGE SCALE GENOMIC DNA]</scope>
    <source>
        <strain>USA300</strain>
    </source>
</reference>
<comment type="function">
    <text evidence="1">Required for replicative DNA synthesis. This DNA polymerase also exhibits 3' to 5' exonuclease activity.</text>
</comment>
<comment type="catalytic activity">
    <reaction evidence="1">
        <text>DNA(n) + a 2'-deoxyribonucleoside 5'-triphosphate = DNA(n+1) + diphosphate</text>
        <dbReference type="Rhea" id="RHEA:22508"/>
        <dbReference type="Rhea" id="RHEA-COMP:17339"/>
        <dbReference type="Rhea" id="RHEA-COMP:17340"/>
        <dbReference type="ChEBI" id="CHEBI:33019"/>
        <dbReference type="ChEBI" id="CHEBI:61560"/>
        <dbReference type="ChEBI" id="CHEBI:173112"/>
        <dbReference type="EC" id="2.7.7.7"/>
    </reaction>
</comment>
<comment type="subcellular location">
    <subcellularLocation>
        <location evidence="1">Cytoplasm</location>
    </subcellularLocation>
</comment>
<comment type="similarity">
    <text evidence="1">Belongs to the DNA polymerase type-C family. PolC subfamily.</text>
</comment>